<organism>
    <name type="scientific">Escherichia coli (strain K12)</name>
    <dbReference type="NCBI Taxonomy" id="83333"/>
    <lineage>
        <taxon>Bacteria</taxon>
        <taxon>Pseudomonadati</taxon>
        <taxon>Pseudomonadota</taxon>
        <taxon>Gammaproteobacteria</taxon>
        <taxon>Enterobacterales</taxon>
        <taxon>Enterobacteriaceae</taxon>
        <taxon>Escherichia</taxon>
    </lineage>
</organism>
<gene>
    <name evidence="1" type="primary">ves</name>
    <name type="synonym">ydjR</name>
    <name type="ordered locus">b1742</name>
    <name type="ordered locus">JW1731</name>
</gene>
<dbReference type="EMBL" id="U00096">
    <property type="protein sequence ID" value="AAC74812.2"/>
    <property type="molecule type" value="Genomic_DNA"/>
</dbReference>
<dbReference type="EMBL" id="AP009048">
    <property type="protein sequence ID" value="BAA15530.1"/>
    <property type="molecule type" value="Genomic_DNA"/>
</dbReference>
<dbReference type="PIR" id="F64933">
    <property type="entry name" value="F64933"/>
</dbReference>
<dbReference type="RefSeq" id="NP_416256.2">
    <property type="nucleotide sequence ID" value="NC_000913.3"/>
</dbReference>
<dbReference type="RefSeq" id="WP_001300480.1">
    <property type="nucleotide sequence ID" value="NZ_SSZK01000001.1"/>
</dbReference>
<dbReference type="SMR" id="P76214"/>
<dbReference type="BioGRID" id="4262238">
    <property type="interactions" value="2"/>
</dbReference>
<dbReference type="DIP" id="DIP-11778N"/>
<dbReference type="FunCoup" id="P76214">
    <property type="interactions" value="60"/>
</dbReference>
<dbReference type="IntAct" id="P76214">
    <property type="interactions" value="3"/>
</dbReference>
<dbReference type="STRING" id="511145.b1742"/>
<dbReference type="PaxDb" id="511145-b1742"/>
<dbReference type="EnsemblBacteria" id="AAC74812">
    <property type="protein sequence ID" value="AAC74812"/>
    <property type="gene ID" value="b1742"/>
</dbReference>
<dbReference type="GeneID" id="946245"/>
<dbReference type="KEGG" id="ecj:JW1731"/>
<dbReference type="KEGG" id="eco:b1742"/>
<dbReference type="KEGG" id="ecoc:C3026_09955"/>
<dbReference type="PATRIC" id="fig|511145.12.peg.1814"/>
<dbReference type="EchoBASE" id="EB3750"/>
<dbReference type="eggNOG" id="COG3758">
    <property type="taxonomic scope" value="Bacteria"/>
</dbReference>
<dbReference type="HOGENOM" id="CLU_090931_5_0_6"/>
<dbReference type="InParanoid" id="P76214"/>
<dbReference type="OMA" id="ETREICC"/>
<dbReference type="OrthoDB" id="9800082at2"/>
<dbReference type="PhylomeDB" id="P76214"/>
<dbReference type="BioCyc" id="EcoCyc:G6938-MONOMER"/>
<dbReference type="PRO" id="PR:P76214"/>
<dbReference type="Proteomes" id="UP000000625">
    <property type="component" value="Chromosome"/>
</dbReference>
<dbReference type="GO" id="GO:0070417">
    <property type="term" value="P:cellular response to cold"/>
    <property type="evidence" value="ECO:0000270"/>
    <property type="project" value="EcoCyc"/>
</dbReference>
<dbReference type="CDD" id="cd20293">
    <property type="entry name" value="cupin_HutD_N"/>
    <property type="match status" value="1"/>
</dbReference>
<dbReference type="Gene3D" id="2.60.120.10">
    <property type="entry name" value="Jelly Rolls"/>
    <property type="match status" value="1"/>
</dbReference>
<dbReference type="HAMAP" id="MF_01591">
    <property type="entry name" value="Ves"/>
    <property type="match status" value="1"/>
</dbReference>
<dbReference type="InterPro" id="IPR014710">
    <property type="entry name" value="RmlC-like_jellyroll"/>
</dbReference>
<dbReference type="InterPro" id="IPR011051">
    <property type="entry name" value="RmlC_Cupin_sf"/>
</dbReference>
<dbReference type="InterPro" id="IPR010282">
    <property type="entry name" value="Uncharacterised_HutD/Ves"/>
</dbReference>
<dbReference type="InterPro" id="IPR023482">
    <property type="entry name" value="Uncharacterised_Ves"/>
</dbReference>
<dbReference type="NCBIfam" id="NF008488">
    <property type="entry name" value="PRK11396.1"/>
    <property type="match status" value="1"/>
</dbReference>
<dbReference type="PANTHER" id="PTHR37943">
    <property type="entry name" value="PROTEIN VES"/>
    <property type="match status" value="1"/>
</dbReference>
<dbReference type="PANTHER" id="PTHR37943:SF1">
    <property type="entry name" value="PROTEIN VES"/>
    <property type="match status" value="1"/>
</dbReference>
<dbReference type="Pfam" id="PF05962">
    <property type="entry name" value="HutD"/>
    <property type="match status" value="1"/>
</dbReference>
<dbReference type="SUPFAM" id="SSF51182">
    <property type="entry name" value="RmlC-like cupins"/>
    <property type="match status" value="1"/>
</dbReference>
<accession>P76214</accession>
<accession>P77456</accession>
<proteinExistence type="evidence at protein level"/>
<sequence length="191" mass="21577">MEYFDMRKMSVNLWRNAAGETREICTFPPAKRDFYWRASIASIAANGEFSLFPGMERIVTLLEGGEMLLESADRFNHTLKPFQPFAFAADQVVKAKLTAGQMSMDFNIMTRLDVCKAKVRIAERTFTTFGSRGGVVFVINGAWQLGDKLLTTDQGACWFDGRHTLRLLQPQGKLLFSEINWLAGHSPDQVQ</sequence>
<protein>
    <recommendedName>
        <fullName evidence="1">Protein Ves</fullName>
    </recommendedName>
    <alternativeName>
        <fullName>Various environmental stresses-induced protein</fullName>
    </alternativeName>
</protein>
<comment type="developmental stage">
    <text evidence="2">Expression peaks 6-12 hours after induction.</text>
</comment>
<comment type="induction">
    <text evidence="2">Induced by various environmental stresses, including low temperature, osmotic shock and oxygen. Expression is induced more than 10 fold by reducing temperature from 37 to 25 degrees Celsius.</text>
</comment>
<comment type="similarity">
    <text evidence="1">Belongs to the Ves family.</text>
</comment>
<reference key="1">
    <citation type="journal article" date="1996" name="DNA Res.">
        <title>A 570-kb DNA sequence of the Escherichia coli K-12 genome corresponding to the 28.0-40.1 min region on the linkage map.</title>
        <authorList>
            <person name="Aiba H."/>
            <person name="Baba T."/>
            <person name="Fujita K."/>
            <person name="Hayashi K."/>
            <person name="Inada T."/>
            <person name="Isono K."/>
            <person name="Itoh T."/>
            <person name="Kasai H."/>
            <person name="Kashimoto K."/>
            <person name="Kimura S."/>
            <person name="Kitakawa M."/>
            <person name="Kitagawa M."/>
            <person name="Makino K."/>
            <person name="Miki T."/>
            <person name="Mizobuchi K."/>
            <person name="Mori H."/>
            <person name="Mori T."/>
            <person name="Motomura K."/>
            <person name="Nakade S."/>
            <person name="Nakamura Y."/>
            <person name="Nashimoto H."/>
            <person name="Nishio Y."/>
            <person name="Oshima T."/>
            <person name="Saito N."/>
            <person name="Sampei G."/>
            <person name="Seki Y."/>
            <person name="Sivasundaram S."/>
            <person name="Tagami H."/>
            <person name="Takeda J."/>
            <person name="Takemoto K."/>
            <person name="Takeuchi Y."/>
            <person name="Wada C."/>
            <person name="Yamamoto Y."/>
            <person name="Horiuchi T."/>
        </authorList>
    </citation>
    <scope>NUCLEOTIDE SEQUENCE [LARGE SCALE GENOMIC DNA]</scope>
    <source>
        <strain>K12 / W3110 / ATCC 27325 / DSM 5911</strain>
    </source>
</reference>
<reference key="2">
    <citation type="journal article" date="1997" name="Science">
        <title>The complete genome sequence of Escherichia coli K-12.</title>
        <authorList>
            <person name="Blattner F.R."/>
            <person name="Plunkett G. III"/>
            <person name="Bloch C.A."/>
            <person name="Perna N.T."/>
            <person name="Burland V."/>
            <person name="Riley M."/>
            <person name="Collado-Vides J."/>
            <person name="Glasner J.D."/>
            <person name="Rode C.K."/>
            <person name="Mayhew G.F."/>
            <person name="Gregor J."/>
            <person name="Davis N.W."/>
            <person name="Kirkpatrick H.A."/>
            <person name="Goeden M.A."/>
            <person name="Rose D.J."/>
            <person name="Mau B."/>
            <person name="Shao Y."/>
        </authorList>
    </citation>
    <scope>NUCLEOTIDE SEQUENCE [LARGE SCALE GENOMIC DNA]</scope>
    <source>
        <strain>K12 / MG1655 / ATCC 47076</strain>
    </source>
</reference>
<reference key="3">
    <citation type="journal article" date="2006" name="Mol. Syst. Biol.">
        <title>Highly accurate genome sequences of Escherichia coli K-12 strains MG1655 and W3110.</title>
        <authorList>
            <person name="Hayashi K."/>
            <person name="Morooka N."/>
            <person name="Yamamoto Y."/>
            <person name="Fujita K."/>
            <person name="Isono K."/>
            <person name="Choi S."/>
            <person name="Ohtsubo E."/>
            <person name="Baba T."/>
            <person name="Wanner B.L."/>
            <person name="Mori H."/>
            <person name="Horiuchi T."/>
        </authorList>
    </citation>
    <scope>NUCLEOTIDE SEQUENCE [LARGE SCALE GENOMIC DNA]</scope>
    <source>
        <strain>K12 / W3110 / ATCC 27325 / DSM 5911</strain>
    </source>
</reference>
<reference key="4">
    <citation type="journal article" date="2002" name="J. Mol. Microbiol. Biotechnol.">
        <title>Characterization of the ves gene, which is expressed at a low temperature in Escherichia coli.</title>
        <authorList>
            <person name="Yamada M."/>
            <person name="Nagamitsu H."/>
            <person name="Izu H."/>
            <person name="Nakamura K."/>
            <person name="Talukder A.A."/>
        </authorList>
    </citation>
    <scope>PROTEIN SEQUENCE OF 1-9</scope>
    <scope>DEVELOPMENTAL STAGE</scope>
    <scope>INDUCTION</scope>
    <source>
        <strain>K12</strain>
    </source>
</reference>
<name>VES_ECOLI</name>
<feature type="chain" id="PRO_0000169006" description="Protein Ves">
    <location>
        <begin position="1"/>
        <end position="191"/>
    </location>
</feature>
<evidence type="ECO:0000255" key="1">
    <source>
        <dbReference type="HAMAP-Rule" id="MF_01591"/>
    </source>
</evidence>
<evidence type="ECO:0000269" key="2">
    <source>
    </source>
</evidence>
<keyword id="KW-0903">Direct protein sequencing</keyword>
<keyword id="KW-1185">Reference proteome</keyword>
<keyword id="KW-0346">Stress response</keyword>